<dbReference type="EC" id="2.5.1.78" evidence="1"/>
<dbReference type="EMBL" id="CP000863">
    <property type="protein sequence ID" value="ACC58898.1"/>
    <property type="molecule type" value="Genomic_DNA"/>
</dbReference>
<dbReference type="SMR" id="B2I1Q0"/>
<dbReference type="KEGG" id="abc:ACICU_03589"/>
<dbReference type="HOGENOM" id="CLU_089358_1_1_6"/>
<dbReference type="UniPathway" id="UPA00275">
    <property type="reaction ID" value="UER00404"/>
</dbReference>
<dbReference type="Proteomes" id="UP000008839">
    <property type="component" value="Chromosome"/>
</dbReference>
<dbReference type="GO" id="GO:0005829">
    <property type="term" value="C:cytosol"/>
    <property type="evidence" value="ECO:0007669"/>
    <property type="project" value="TreeGrafter"/>
</dbReference>
<dbReference type="GO" id="GO:0009349">
    <property type="term" value="C:riboflavin synthase complex"/>
    <property type="evidence" value="ECO:0007669"/>
    <property type="project" value="InterPro"/>
</dbReference>
<dbReference type="GO" id="GO:0000906">
    <property type="term" value="F:6,7-dimethyl-8-ribityllumazine synthase activity"/>
    <property type="evidence" value="ECO:0007669"/>
    <property type="project" value="UniProtKB-UniRule"/>
</dbReference>
<dbReference type="GO" id="GO:0009231">
    <property type="term" value="P:riboflavin biosynthetic process"/>
    <property type="evidence" value="ECO:0007669"/>
    <property type="project" value="UniProtKB-UniRule"/>
</dbReference>
<dbReference type="CDD" id="cd09209">
    <property type="entry name" value="Lumazine_synthase-I"/>
    <property type="match status" value="1"/>
</dbReference>
<dbReference type="FunFam" id="3.40.50.960:FF:000001">
    <property type="entry name" value="6,7-dimethyl-8-ribityllumazine synthase"/>
    <property type="match status" value="1"/>
</dbReference>
<dbReference type="Gene3D" id="3.40.50.960">
    <property type="entry name" value="Lumazine/riboflavin synthase"/>
    <property type="match status" value="1"/>
</dbReference>
<dbReference type="HAMAP" id="MF_00178">
    <property type="entry name" value="Lumazine_synth"/>
    <property type="match status" value="1"/>
</dbReference>
<dbReference type="InterPro" id="IPR034964">
    <property type="entry name" value="LS"/>
</dbReference>
<dbReference type="InterPro" id="IPR002180">
    <property type="entry name" value="LS/RS"/>
</dbReference>
<dbReference type="InterPro" id="IPR036467">
    <property type="entry name" value="LS/RS_sf"/>
</dbReference>
<dbReference type="NCBIfam" id="TIGR00114">
    <property type="entry name" value="lumazine-synth"/>
    <property type="match status" value="1"/>
</dbReference>
<dbReference type="NCBIfam" id="NF000812">
    <property type="entry name" value="PRK00061.1-4"/>
    <property type="match status" value="1"/>
</dbReference>
<dbReference type="PANTHER" id="PTHR21058:SF0">
    <property type="entry name" value="6,7-DIMETHYL-8-RIBITYLLUMAZINE SYNTHASE"/>
    <property type="match status" value="1"/>
</dbReference>
<dbReference type="PANTHER" id="PTHR21058">
    <property type="entry name" value="6,7-DIMETHYL-8-RIBITYLLUMAZINE SYNTHASE DMRL SYNTHASE LUMAZINE SYNTHASE"/>
    <property type="match status" value="1"/>
</dbReference>
<dbReference type="Pfam" id="PF00885">
    <property type="entry name" value="DMRL_synthase"/>
    <property type="match status" value="1"/>
</dbReference>
<dbReference type="SUPFAM" id="SSF52121">
    <property type="entry name" value="Lumazine synthase"/>
    <property type="match status" value="1"/>
</dbReference>
<gene>
    <name evidence="1" type="primary">ribH</name>
    <name type="ordered locus">ACICU_03589</name>
</gene>
<comment type="function">
    <text evidence="1">Catalyzes the formation of 6,7-dimethyl-8-ribityllumazine by condensation of 5-amino-6-(D-ribitylamino)uracil with 3,4-dihydroxy-2-butanone 4-phosphate. This is the penultimate step in the biosynthesis of riboflavin.</text>
</comment>
<comment type="catalytic activity">
    <reaction evidence="1">
        <text>(2S)-2-hydroxy-3-oxobutyl phosphate + 5-amino-6-(D-ribitylamino)uracil = 6,7-dimethyl-8-(1-D-ribityl)lumazine + phosphate + 2 H2O + H(+)</text>
        <dbReference type="Rhea" id="RHEA:26152"/>
        <dbReference type="ChEBI" id="CHEBI:15377"/>
        <dbReference type="ChEBI" id="CHEBI:15378"/>
        <dbReference type="ChEBI" id="CHEBI:15934"/>
        <dbReference type="ChEBI" id="CHEBI:43474"/>
        <dbReference type="ChEBI" id="CHEBI:58201"/>
        <dbReference type="ChEBI" id="CHEBI:58830"/>
        <dbReference type="EC" id="2.5.1.78"/>
    </reaction>
</comment>
<comment type="pathway">
    <text evidence="1">Cofactor biosynthesis; riboflavin biosynthesis; riboflavin from 2-hydroxy-3-oxobutyl phosphate and 5-amino-6-(D-ribitylamino)uracil: step 1/2.</text>
</comment>
<comment type="subunit">
    <text evidence="1">Forms an icosahedral capsid composed of 60 subunits, arranged as a dodecamer of pentamers.</text>
</comment>
<comment type="similarity">
    <text evidence="1">Belongs to the DMRL synthase family.</text>
</comment>
<proteinExistence type="inferred from homology"/>
<sequence>MAIRRIEGLLHLASEGRYAILVGRFNSFVVEHLLEGAIDTLKRHGVNEDNITVIHAPGAWELPIVAKKLATSNQFDAIIALGAVIRGSTPHFDFVAGECAKGLGVVALESSLPVINGVLTTDSIEQAIERSGTKAGNKGSEAALTAIEMVNLLKAI</sequence>
<organism>
    <name type="scientific">Acinetobacter baumannii (strain ACICU)</name>
    <dbReference type="NCBI Taxonomy" id="405416"/>
    <lineage>
        <taxon>Bacteria</taxon>
        <taxon>Pseudomonadati</taxon>
        <taxon>Pseudomonadota</taxon>
        <taxon>Gammaproteobacteria</taxon>
        <taxon>Moraxellales</taxon>
        <taxon>Moraxellaceae</taxon>
        <taxon>Acinetobacter</taxon>
        <taxon>Acinetobacter calcoaceticus/baumannii complex</taxon>
    </lineage>
</organism>
<feature type="chain" id="PRO_1000098153" description="6,7-dimethyl-8-ribityllumazine synthase">
    <location>
        <begin position="1"/>
        <end position="156"/>
    </location>
</feature>
<feature type="active site" description="Proton donor" evidence="1">
    <location>
        <position position="91"/>
    </location>
</feature>
<feature type="binding site" evidence="1">
    <location>
        <position position="25"/>
    </location>
    <ligand>
        <name>5-amino-6-(D-ribitylamino)uracil</name>
        <dbReference type="ChEBI" id="CHEBI:15934"/>
    </ligand>
</feature>
<feature type="binding site" evidence="1">
    <location>
        <begin position="59"/>
        <end position="61"/>
    </location>
    <ligand>
        <name>5-amino-6-(D-ribitylamino)uracil</name>
        <dbReference type="ChEBI" id="CHEBI:15934"/>
    </ligand>
</feature>
<feature type="binding site" evidence="1">
    <location>
        <begin position="83"/>
        <end position="85"/>
    </location>
    <ligand>
        <name>5-amino-6-(D-ribitylamino)uracil</name>
        <dbReference type="ChEBI" id="CHEBI:15934"/>
    </ligand>
</feature>
<feature type="binding site" evidence="1">
    <location>
        <begin position="88"/>
        <end position="89"/>
    </location>
    <ligand>
        <name>(2S)-2-hydroxy-3-oxobutyl phosphate</name>
        <dbReference type="ChEBI" id="CHEBI:58830"/>
    </ligand>
</feature>
<feature type="binding site" evidence="1">
    <location>
        <position position="116"/>
    </location>
    <ligand>
        <name>5-amino-6-(D-ribitylamino)uracil</name>
        <dbReference type="ChEBI" id="CHEBI:15934"/>
    </ligand>
</feature>
<feature type="binding site" evidence="1">
    <location>
        <position position="130"/>
    </location>
    <ligand>
        <name>(2S)-2-hydroxy-3-oxobutyl phosphate</name>
        <dbReference type="ChEBI" id="CHEBI:58830"/>
    </ligand>
</feature>
<reference key="1">
    <citation type="journal article" date="2008" name="Antimicrob. Agents Chemother.">
        <title>Whole-genome pyrosequencing of an epidemic multidrug-resistant Acinetobacter baumannii strain belonging to the European clone II group.</title>
        <authorList>
            <person name="Iacono M."/>
            <person name="Villa L."/>
            <person name="Fortini D."/>
            <person name="Bordoni R."/>
            <person name="Imperi F."/>
            <person name="Bonnal R.J."/>
            <person name="Sicheritz-Ponten T."/>
            <person name="De Bellis G."/>
            <person name="Visca P."/>
            <person name="Cassone A."/>
            <person name="Carattoli A."/>
        </authorList>
    </citation>
    <scope>NUCLEOTIDE SEQUENCE [LARGE SCALE GENOMIC DNA]</scope>
    <source>
        <strain>ACICU</strain>
    </source>
</reference>
<evidence type="ECO:0000255" key="1">
    <source>
        <dbReference type="HAMAP-Rule" id="MF_00178"/>
    </source>
</evidence>
<name>RISB_ACIBC</name>
<keyword id="KW-0686">Riboflavin biosynthesis</keyword>
<keyword id="KW-0808">Transferase</keyword>
<accession>B2I1Q0</accession>
<protein>
    <recommendedName>
        <fullName evidence="1">6,7-dimethyl-8-ribityllumazine synthase</fullName>
        <shortName evidence="1">DMRL synthase</shortName>
        <shortName evidence="1">LS</shortName>
        <shortName evidence="1">Lumazine synthase</shortName>
        <ecNumber evidence="1">2.5.1.78</ecNumber>
    </recommendedName>
</protein>